<organism evidence="25">
    <name type="scientific">Drosophila melanogaster</name>
    <name type="common">Fruit fly</name>
    <dbReference type="NCBI Taxonomy" id="7227"/>
    <lineage>
        <taxon>Eukaryota</taxon>
        <taxon>Metazoa</taxon>
        <taxon>Ecdysozoa</taxon>
        <taxon>Arthropoda</taxon>
        <taxon>Hexapoda</taxon>
        <taxon>Insecta</taxon>
        <taxon>Pterygota</taxon>
        <taxon>Neoptera</taxon>
        <taxon>Endopterygota</taxon>
        <taxon>Diptera</taxon>
        <taxon>Brachycera</taxon>
        <taxon>Muscomorpha</taxon>
        <taxon>Ephydroidea</taxon>
        <taxon>Drosophilidae</taxon>
        <taxon>Drosophila</taxon>
        <taxon>Sophophora</taxon>
    </lineage>
</organism>
<dbReference type="EMBL" id="U77370">
    <property type="protein sequence ID" value="AAB39842.2"/>
    <property type="molecule type" value="mRNA"/>
</dbReference>
<dbReference type="EMBL" id="U81384">
    <property type="protein sequence ID" value="AAD00517.1"/>
    <property type="molecule type" value="mRNA"/>
</dbReference>
<dbReference type="EMBL" id="AE014298">
    <property type="protein sequence ID" value="AAF45866.2"/>
    <property type="molecule type" value="Genomic_DNA"/>
</dbReference>
<dbReference type="EMBL" id="AL121800">
    <property type="protein sequence ID" value="CAD24780.1"/>
    <property type="molecule type" value="Genomic_DNA"/>
</dbReference>
<dbReference type="EMBL" id="AY058627">
    <property type="protein sequence ID" value="AAL13856.1"/>
    <property type="molecule type" value="mRNA"/>
</dbReference>
<dbReference type="RefSeq" id="NP_001259204.1">
    <property type="nucleotide sequence ID" value="NM_001272275.1"/>
</dbReference>
<dbReference type="RefSeq" id="NP_525062.2">
    <property type="nucleotide sequence ID" value="NM_080323.4"/>
</dbReference>
<dbReference type="SMR" id="Q9W4S7"/>
<dbReference type="BioGRID" id="57835">
    <property type="interactions" value="184"/>
</dbReference>
<dbReference type="DIP" id="DIP-18847N"/>
<dbReference type="FunCoup" id="Q9W4S7">
    <property type="interactions" value="186"/>
</dbReference>
<dbReference type="IntAct" id="Q9W4S7">
    <property type="interactions" value="21"/>
</dbReference>
<dbReference type="MINT" id="Q9W4S7"/>
<dbReference type="STRING" id="7227.FBpp0303995"/>
<dbReference type="iPTMnet" id="Q9W4S7"/>
<dbReference type="PaxDb" id="7227-FBpp0303995"/>
<dbReference type="DNASU" id="31310"/>
<dbReference type="EnsemblMetazoa" id="FBtr0070525">
    <property type="protein sequence ID" value="FBpp0070501"/>
    <property type="gene ID" value="FBgn0262656"/>
</dbReference>
<dbReference type="EnsemblMetazoa" id="FBtr0331605">
    <property type="protein sequence ID" value="FBpp0303995"/>
    <property type="gene ID" value="FBgn0262656"/>
</dbReference>
<dbReference type="GeneID" id="31310"/>
<dbReference type="KEGG" id="dme:Dmel_CG10798"/>
<dbReference type="UCSC" id="CG10798-RA">
    <property type="organism name" value="d. melanogaster"/>
</dbReference>
<dbReference type="AGR" id="FB:FBgn0262656"/>
<dbReference type="CTD" id="4609"/>
<dbReference type="FlyBase" id="FBgn0262656">
    <property type="gene designation" value="Myc"/>
</dbReference>
<dbReference type="VEuPathDB" id="VectorBase:FBgn0262656"/>
<dbReference type="eggNOG" id="KOG2483">
    <property type="taxonomic scope" value="Eukaryota"/>
</dbReference>
<dbReference type="HOGENOM" id="CLU_016112_0_0_1"/>
<dbReference type="InParanoid" id="Q9W4S7"/>
<dbReference type="OMA" id="GDCMWSA"/>
<dbReference type="OrthoDB" id="5964374at2759"/>
<dbReference type="PhylomeDB" id="Q9W4S7"/>
<dbReference type="Reactome" id="R-DME-8866911">
    <property type="pathway name" value="TFAP2 (AP-2) family regulates transcription of cell cycle factors"/>
</dbReference>
<dbReference type="SignaLink" id="Q9W4S7"/>
<dbReference type="BioGRID-ORCS" id="31310">
    <property type="hits" value="1 hit in 1 CRISPR screen"/>
</dbReference>
<dbReference type="GenomeRNAi" id="31310"/>
<dbReference type="PRO" id="PR:Q9W4S7"/>
<dbReference type="Proteomes" id="UP000000803">
    <property type="component" value="Chromosome X"/>
</dbReference>
<dbReference type="Bgee" id="FBgn0262656">
    <property type="expression patterns" value="Expressed in posterior terminal follicle cell in ovary and 322 other cell types or tissues"/>
</dbReference>
<dbReference type="ExpressionAtlas" id="Q9W4S7">
    <property type="expression patterns" value="baseline and differential"/>
</dbReference>
<dbReference type="GO" id="GO:0005737">
    <property type="term" value="C:cytoplasm"/>
    <property type="evidence" value="ECO:0007669"/>
    <property type="project" value="UniProtKB-SubCell"/>
</dbReference>
<dbReference type="GO" id="GO:0035363">
    <property type="term" value="C:histone locus body"/>
    <property type="evidence" value="ECO:0000314"/>
    <property type="project" value="FlyBase"/>
</dbReference>
<dbReference type="GO" id="GO:0005730">
    <property type="term" value="C:nucleolus"/>
    <property type="evidence" value="ECO:0000314"/>
    <property type="project" value="UniProtKB"/>
</dbReference>
<dbReference type="GO" id="GO:0005634">
    <property type="term" value="C:nucleus"/>
    <property type="evidence" value="ECO:0000314"/>
    <property type="project" value="UniProtKB"/>
</dbReference>
<dbReference type="GO" id="GO:0032991">
    <property type="term" value="C:protein-containing complex"/>
    <property type="evidence" value="ECO:0000353"/>
    <property type="project" value="FlyBase"/>
</dbReference>
<dbReference type="GO" id="GO:0003677">
    <property type="term" value="F:DNA binding"/>
    <property type="evidence" value="ECO:0000314"/>
    <property type="project" value="UniProtKB"/>
</dbReference>
<dbReference type="GO" id="GO:0003700">
    <property type="term" value="F:DNA-binding transcription factor activity"/>
    <property type="evidence" value="ECO:0000314"/>
    <property type="project" value="UniProtKB"/>
</dbReference>
<dbReference type="GO" id="GO:0000981">
    <property type="term" value="F:DNA-binding transcription factor activity, RNA polymerase II-specific"/>
    <property type="evidence" value="ECO:0000250"/>
    <property type="project" value="UniProtKB"/>
</dbReference>
<dbReference type="GO" id="GO:0046983">
    <property type="term" value="F:protein dimerization activity"/>
    <property type="evidence" value="ECO:0007669"/>
    <property type="project" value="InterPro"/>
</dbReference>
<dbReference type="GO" id="GO:0000978">
    <property type="term" value="F:RNA polymerase II cis-regulatory region sequence-specific DNA binding"/>
    <property type="evidence" value="ECO:0000318"/>
    <property type="project" value="GO_Central"/>
</dbReference>
<dbReference type="GO" id="GO:1990381">
    <property type="term" value="F:ubiquitin-specific protease binding"/>
    <property type="evidence" value="ECO:0000353"/>
    <property type="project" value="UniProtKB"/>
</dbReference>
<dbReference type="GO" id="GO:0035212">
    <property type="term" value="P:cell competition in a multicellular organism"/>
    <property type="evidence" value="ECO:0000315"/>
    <property type="project" value="FlyBase"/>
</dbReference>
<dbReference type="GO" id="GO:0032869">
    <property type="term" value="P:cellular response to insulin stimulus"/>
    <property type="evidence" value="ECO:0000314"/>
    <property type="project" value="FlyBase"/>
</dbReference>
<dbReference type="GO" id="GO:0031670">
    <property type="term" value="P:cellular response to nutrient"/>
    <property type="evidence" value="ECO:0000314"/>
    <property type="project" value="FlyBase"/>
</dbReference>
<dbReference type="GO" id="GO:0042023">
    <property type="term" value="P:DNA endoreduplication"/>
    <property type="evidence" value="ECO:0000315"/>
    <property type="project" value="FlyBase"/>
</dbReference>
<dbReference type="GO" id="GO:0009880">
    <property type="term" value="P:embryonic pattern specification"/>
    <property type="evidence" value="ECO:0000316"/>
    <property type="project" value="FlyBase"/>
</dbReference>
<dbReference type="GO" id="GO:0008286">
    <property type="term" value="P:insulin receptor signaling pathway"/>
    <property type="evidence" value="ECO:0000314"/>
    <property type="project" value="FlyBase"/>
</dbReference>
<dbReference type="GO" id="GO:0055088">
    <property type="term" value="P:lipid homeostasis"/>
    <property type="evidence" value="ECO:0000315"/>
    <property type="project" value="FlyBase"/>
</dbReference>
<dbReference type="GO" id="GO:0061060">
    <property type="term" value="P:negative regulation of peptidoglycan recognition protein signaling pathway"/>
    <property type="evidence" value="ECO:0000315"/>
    <property type="project" value="FlyBase"/>
</dbReference>
<dbReference type="GO" id="GO:0022008">
    <property type="term" value="P:neurogenesis"/>
    <property type="evidence" value="ECO:0000316"/>
    <property type="project" value="FlyBase"/>
</dbReference>
<dbReference type="GO" id="GO:0017126">
    <property type="term" value="P:nucleologenesis"/>
    <property type="evidence" value="ECO:0000315"/>
    <property type="project" value="FlyBase"/>
</dbReference>
<dbReference type="GO" id="GO:0030307">
    <property type="term" value="P:positive regulation of cell growth"/>
    <property type="evidence" value="ECO:0000316"/>
    <property type="project" value="FlyBase"/>
</dbReference>
<dbReference type="GO" id="GO:0045793">
    <property type="term" value="P:positive regulation of cell size"/>
    <property type="evidence" value="ECO:0000315"/>
    <property type="project" value="UniProtKB"/>
</dbReference>
<dbReference type="GO" id="GO:0048639">
    <property type="term" value="P:positive regulation of developmental growth"/>
    <property type="evidence" value="ECO:0000315"/>
    <property type="project" value="FlyBase"/>
</dbReference>
<dbReference type="GO" id="GO:0010628">
    <property type="term" value="P:positive regulation of gene expression"/>
    <property type="evidence" value="ECO:0000315"/>
    <property type="project" value="FlyBase"/>
</dbReference>
<dbReference type="GO" id="GO:0045927">
    <property type="term" value="P:positive regulation of growth"/>
    <property type="evidence" value="ECO:0000315"/>
    <property type="project" value="FlyBase"/>
</dbReference>
<dbReference type="GO" id="GO:0045572">
    <property type="term" value="P:positive regulation of imaginal disc growth"/>
    <property type="evidence" value="ECO:0000315"/>
    <property type="project" value="FlyBase"/>
</dbReference>
<dbReference type="GO" id="GO:0040018">
    <property type="term" value="P:positive regulation of multicellular organism growth"/>
    <property type="evidence" value="ECO:0000315"/>
    <property type="project" value="FlyBase"/>
</dbReference>
<dbReference type="GO" id="GO:0050769">
    <property type="term" value="P:positive regulation of neurogenesis"/>
    <property type="evidence" value="ECO:0000315"/>
    <property type="project" value="FlyBase"/>
</dbReference>
<dbReference type="GO" id="GO:0046622">
    <property type="term" value="P:positive regulation of organ growth"/>
    <property type="evidence" value="ECO:0000315"/>
    <property type="project" value="FlyBase"/>
</dbReference>
<dbReference type="GO" id="GO:0045943">
    <property type="term" value="P:positive regulation of transcription by RNA polymerase I"/>
    <property type="evidence" value="ECO:0000314"/>
    <property type="project" value="FlyBase"/>
</dbReference>
<dbReference type="GO" id="GO:0045944">
    <property type="term" value="P:positive regulation of transcription by RNA polymerase II"/>
    <property type="evidence" value="ECO:0000314"/>
    <property type="project" value="FlyBase"/>
</dbReference>
<dbReference type="GO" id="GO:0045945">
    <property type="term" value="P:positive regulation of transcription by RNA polymerase III"/>
    <property type="evidence" value="ECO:0000314"/>
    <property type="project" value="FlyBase"/>
</dbReference>
<dbReference type="GO" id="GO:0042981">
    <property type="term" value="P:regulation of apoptotic process"/>
    <property type="evidence" value="ECO:0000315"/>
    <property type="project" value="FlyBase"/>
</dbReference>
<dbReference type="GO" id="GO:0010506">
    <property type="term" value="P:regulation of autophagy"/>
    <property type="evidence" value="ECO:0000315"/>
    <property type="project" value="FlyBase"/>
</dbReference>
<dbReference type="GO" id="GO:0006355">
    <property type="term" value="P:regulation of DNA-templated transcription"/>
    <property type="evidence" value="ECO:0000314"/>
    <property type="project" value="UniProtKB"/>
</dbReference>
<dbReference type="GO" id="GO:0046620">
    <property type="term" value="P:regulation of organ growth"/>
    <property type="evidence" value="ECO:0000315"/>
    <property type="project" value="FlyBase"/>
</dbReference>
<dbReference type="GO" id="GO:0006357">
    <property type="term" value="P:regulation of transcription by RNA polymerase II"/>
    <property type="evidence" value="ECO:0000318"/>
    <property type="project" value="GO_Central"/>
</dbReference>
<dbReference type="GO" id="GO:0042594">
    <property type="term" value="P:response to starvation"/>
    <property type="evidence" value="ECO:0000315"/>
    <property type="project" value="FlyBase"/>
</dbReference>
<dbReference type="GO" id="GO:0016072">
    <property type="term" value="P:rRNA metabolic process"/>
    <property type="evidence" value="ECO:0000315"/>
    <property type="project" value="UniProtKB"/>
</dbReference>
<dbReference type="GO" id="GO:0042246">
    <property type="term" value="P:tissue regeneration"/>
    <property type="evidence" value="ECO:0000315"/>
    <property type="project" value="FlyBase"/>
</dbReference>
<dbReference type="CDD" id="cd11400">
    <property type="entry name" value="bHLHzip_Myc"/>
    <property type="match status" value="1"/>
</dbReference>
<dbReference type="FunFam" id="4.10.280.10:FF:000019">
    <property type="entry name" value="Myc proto-oncogene protein"/>
    <property type="match status" value="1"/>
</dbReference>
<dbReference type="Gene3D" id="4.10.280.10">
    <property type="entry name" value="Helix-loop-helix DNA-binding domain"/>
    <property type="match status" value="1"/>
</dbReference>
<dbReference type="InterPro" id="IPR011598">
    <property type="entry name" value="bHLH_dom"/>
</dbReference>
<dbReference type="InterPro" id="IPR036638">
    <property type="entry name" value="HLH_DNA-bd_sf"/>
</dbReference>
<dbReference type="InterPro" id="IPR050433">
    <property type="entry name" value="Myc_transcription_factors"/>
</dbReference>
<dbReference type="PANTHER" id="PTHR45851">
    <property type="entry name" value="MYC PROTO-ONCOGENE"/>
    <property type="match status" value="1"/>
</dbReference>
<dbReference type="Pfam" id="PF00010">
    <property type="entry name" value="HLH"/>
    <property type="match status" value="1"/>
</dbReference>
<dbReference type="SMART" id="SM00353">
    <property type="entry name" value="HLH"/>
    <property type="match status" value="1"/>
</dbReference>
<dbReference type="SUPFAM" id="SSF47459">
    <property type="entry name" value="HLH, helix-loop-helix DNA-binding domain"/>
    <property type="match status" value="1"/>
</dbReference>
<dbReference type="PROSITE" id="PS50888">
    <property type="entry name" value="BHLH"/>
    <property type="match status" value="1"/>
</dbReference>
<gene>
    <name evidence="21 24" type="primary">Myc</name>
    <name evidence="21" type="synonym">dm</name>
    <name evidence="24" type="ORF">CG10798</name>
</gene>
<accession>Q9W4S7</accession>
<accession>O96903</accession>
<accession>P91665</accession>
<proteinExistence type="evidence at protein level"/>
<keyword id="KW-0010">Activator</keyword>
<keyword id="KW-0963">Cytoplasm</keyword>
<keyword id="KW-0238">DNA-binding</keyword>
<keyword id="KW-0539">Nucleus</keyword>
<keyword id="KW-0597">Phosphoprotein</keyword>
<keyword id="KW-1185">Reference proteome</keyword>
<keyword id="KW-0804">Transcription</keyword>
<keyword id="KW-0805">Transcription regulation</keyword>
<keyword id="KW-0832">Ubl conjugation</keyword>
<sequence>MALYRSDPYSIMDDQLFSNISIFDMDNDLYDMDKLLSSSTIQSDLEKIEDMESVFQDYDLEEDMKPEIRNIDCMWPAMSSCLTSGNGNGIESGNSAASSYSETGAVSLAMVSGSTNLYSAYQRSQTTDNTQSNQQHVVNSAENMPVIIKKELADLDYTVCQKRLRLSGGDKKSQIQDEVHLIPPGGSLLRKRNNQDIIRKSGELSGSDSIKYQRPDTPHSLTDEVAASEFRHNVDLRACVMGSNNISLTGNDSDVNYIKQISRELQNTGKDPLPVRYIPPINDVLDVLNQHSNSTGGQQQLNQQQLDEQQQAIDIATGRNTVDSPPTTGSDSDSDDGEPLNFDLRHHRTSKSGSNASITTNNNNSNNKNNKLKNNSNGMLHMMHITDHSYTRCNDMVDDGPNLETPSDSDEEIDVVSYTDKKLPTNPSCHLMGALQFQMAHKISIDHMKQKPRYNNFNLPYTPASSSPVKSVANSRYPSPSSTPYQNCSSASPSYSPLSVDSSNVSSSSSSSSSQSSFTTSSSNKGRKRSSLKDPGLLISSSSVYLPGVNNKVTHSSMMSKKSRGKKVVGTSSGNTSPISSGQDVDAMDRNWQRRSGGIATSTSSNSSVHRKDFVLGFDEADTIEKRNQHNDMERQRRIGLKNLFEALKKQIPTIRDKERAPKVNILREAAKLCIQLTQEEKELSMQRQLLSLQLKQRQDTLASYQMELNESRSVSG</sequence>
<reference evidence="22" key="1">
    <citation type="journal article" date="1996" name="Science">
        <title>Myc and Max homologs in Drosophila.</title>
        <authorList>
            <person name="Gallant P."/>
            <person name="Shiio Y."/>
            <person name="Cheng P.F."/>
            <person name="Parkhurst S.M."/>
            <person name="Eisenman R.N."/>
        </authorList>
    </citation>
    <scope>NUCLEOTIDE SEQUENCE [MRNA]</scope>
    <scope>FUNCTION</scope>
    <scope>SUBUNIT</scope>
    <scope>TISSUE SPECIFICITY</scope>
    <scope>DEVELOPMENTAL STAGE</scope>
    <source>
        <strain evidence="19">Oregon-R</strain>
    </source>
</reference>
<reference evidence="22" key="2">
    <citation type="submission" date="2001-10" db="EMBL/GenBank/DDBJ databases">
        <authorList>
            <person name="Gallant P."/>
            <person name="Shiio Y."/>
            <person name="Cheng P.F."/>
            <person name="Parkhurst S.M."/>
            <person name="Eisenman R.N."/>
        </authorList>
    </citation>
    <scope>SEQUENCE REVISION TO 274</scope>
</reference>
<reference evidence="22" key="3">
    <citation type="journal article" date="1997" name="Proc. Natl. Acad. Sci. U.S.A.">
        <title>Drosophila Myc is oncogenic in mammalian cells and plays a role in the diminutive phenotype.</title>
        <authorList>
            <person name="Schreiber-Agus N."/>
            <person name="Stein D."/>
            <person name="Chen K."/>
            <person name="Goltz J.S."/>
            <person name="Stevens L."/>
            <person name="DePinho R.A."/>
        </authorList>
    </citation>
    <scope>NUCLEOTIDE SEQUENCE [MRNA]</scope>
    <scope>TISSUE SPECIFICITY</scope>
    <scope>DEVELOPMENTAL STAGE</scope>
    <source>
        <tissue>Embryo</tissue>
    </source>
</reference>
<reference evidence="22" key="4">
    <citation type="journal article" date="2000" name="Science">
        <title>The genome sequence of Drosophila melanogaster.</title>
        <authorList>
            <person name="Adams M.D."/>
            <person name="Celniker S.E."/>
            <person name="Holt R.A."/>
            <person name="Evans C.A."/>
            <person name="Gocayne J.D."/>
            <person name="Amanatides P.G."/>
            <person name="Scherer S.E."/>
            <person name="Li P.W."/>
            <person name="Hoskins R.A."/>
            <person name="Galle R.F."/>
            <person name="George R.A."/>
            <person name="Lewis S.E."/>
            <person name="Richards S."/>
            <person name="Ashburner M."/>
            <person name="Henderson S.N."/>
            <person name="Sutton G.G."/>
            <person name="Wortman J.R."/>
            <person name="Yandell M.D."/>
            <person name="Zhang Q."/>
            <person name="Chen L.X."/>
            <person name="Brandon R.C."/>
            <person name="Rogers Y.-H.C."/>
            <person name="Blazej R.G."/>
            <person name="Champe M."/>
            <person name="Pfeiffer B.D."/>
            <person name="Wan K.H."/>
            <person name="Doyle C."/>
            <person name="Baxter E.G."/>
            <person name="Helt G."/>
            <person name="Nelson C.R."/>
            <person name="Miklos G.L.G."/>
            <person name="Abril J.F."/>
            <person name="Agbayani A."/>
            <person name="An H.-J."/>
            <person name="Andrews-Pfannkoch C."/>
            <person name="Baldwin D."/>
            <person name="Ballew R.M."/>
            <person name="Basu A."/>
            <person name="Baxendale J."/>
            <person name="Bayraktaroglu L."/>
            <person name="Beasley E.M."/>
            <person name="Beeson K.Y."/>
            <person name="Benos P.V."/>
            <person name="Berman B.P."/>
            <person name="Bhandari D."/>
            <person name="Bolshakov S."/>
            <person name="Borkova D."/>
            <person name="Botchan M.R."/>
            <person name="Bouck J."/>
            <person name="Brokstein P."/>
            <person name="Brottier P."/>
            <person name="Burtis K.C."/>
            <person name="Busam D.A."/>
            <person name="Butler H."/>
            <person name="Cadieu E."/>
            <person name="Center A."/>
            <person name="Chandra I."/>
            <person name="Cherry J.M."/>
            <person name="Cawley S."/>
            <person name="Dahlke C."/>
            <person name="Davenport L.B."/>
            <person name="Davies P."/>
            <person name="de Pablos B."/>
            <person name="Delcher A."/>
            <person name="Deng Z."/>
            <person name="Mays A.D."/>
            <person name="Dew I."/>
            <person name="Dietz S.M."/>
            <person name="Dodson K."/>
            <person name="Doup L.E."/>
            <person name="Downes M."/>
            <person name="Dugan-Rocha S."/>
            <person name="Dunkov B.C."/>
            <person name="Dunn P."/>
            <person name="Durbin K.J."/>
            <person name="Evangelista C.C."/>
            <person name="Ferraz C."/>
            <person name="Ferriera S."/>
            <person name="Fleischmann W."/>
            <person name="Fosler C."/>
            <person name="Gabrielian A.E."/>
            <person name="Garg N.S."/>
            <person name="Gelbart W.M."/>
            <person name="Glasser K."/>
            <person name="Glodek A."/>
            <person name="Gong F."/>
            <person name="Gorrell J.H."/>
            <person name="Gu Z."/>
            <person name="Guan P."/>
            <person name="Harris M."/>
            <person name="Harris N.L."/>
            <person name="Harvey D.A."/>
            <person name="Heiman T.J."/>
            <person name="Hernandez J.R."/>
            <person name="Houck J."/>
            <person name="Hostin D."/>
            <person name="Houston K.A."/>
            <person name="Howland T.J."/>
            <person name="Wei M.-H."/>
            <person name="Ibegwam C."/>
            <person name="Jalali M."/>
            <person name="Kalush F."/>
            <person name="Karpen G.H."/>
            <person name="Ke Z."/>
            <person name="Kennison J.A."/>
            <person name="Ketchum K.A."/>
            <person name="Kimmel B.E."/>
            <person name="Kodira C.D."/>
            <person name="Kraft C.L."/>
            <person name="Kravitz S."/>
            <person name="Kulp D."/>
            <person name="Lai Z."/>
            <person name="Lasko P."/>
            <person name="Lei Y."/>
            <person name="Levitsky A.A."/>
            <person name="Li J.H."/>
            <person name="Li Z."/>
            <person name="Liang Y."/>
            <person name="Lin X."/>
            <person name="Liu X."/>
            <person name="Mattei B."/>
            <person name="McIntosh T.C."/>
            <person name="McLeod M.P."/>
            <person name="McPherson D."/>
            <person name="Merkulov G."/>
            <person name="Milshina N.V."/>
            <person name="Mobarry C."/>
            <person name="Morris J."/>
            <person name="Moshrefi A."/>
            <person name="Mount S.M."/>
            <person name="Moy M."/>
            <person name="Murphy B."/>
            <person name="Murphy L."/>
            <person name="Muzny D.M."/>
            <person name="Nelson D.L."/>
            <person name="Nelson D.R."/>
            <person name="Nelson K.A."/>
            <person name="Nixon K."/>
            <person name="Nusskern D.R."/>
            <person name="Pacleb J.M."/>
            <person name="Palazzolo M."/>
            <person name="Pittman G.S."/>
            <person name="Pan S."/>
            <person name="Pollard J."/>
            <person name="Puri V."/>
            <person name="Reese M.G."/>
            <person name="Reinert K."/>
            <person name="Remington K."/>
            <person name="Saunders R.D.C."/>
            <person name="Scheeler F."/>
            <person name="Shen H."/>
            <person name="Shue B.C."/>
            <person name="Siden-Kiamos I."/>
            <person name="Simpson M."/>
            <person name="Skupski M.P."/>
            <person name="Smith T.J."/>
            <person name="Spier E."/>
            <person name="Spradling A.C."/>
            <person name="Stapleton M."/>
            <person name="Strong R."/>
            <person name="Sun E."/>
            <person name="Svirskas R."/>
            <person name="Tector C."/>
            <person name="Turner R."/>
            <person name="Venter E."/>
            <person name="Wang A.H."/>
            <person name="Wang X."/>
            <person name="Wang Z.-Y."/>
            <person name="Wassarman D.A."/>
            <person name="Weinstock G.M."/>
            <person name="Weissenbach J."/>
            <person name="Williams S.M."/>
            <person name="Woodage T."/>
            <person name="Worley K.C."/>
            <person name="Wu D."/>
            <person name="Yang S."/>
            <person name="Yao Q.A."/>
            <person name="Ye J."/>
            <person name="Yeh R.-F."/>
            <person name="Zaveri J.S."/>
            <person name="Zhan M."/>
            <person name="Zhang G."/>
            <person name="Zhao Q."/>
            <person name="Zheng L."/>
            <person name="Zheng X.H."/>
            <person name="Zhong F.N."/>
            <person name="Zhong W."/>
            <person name="Zhou X."/>
            <person name="Zhu S.C."/>
            <person name="Zhu X."/>
            <person name="Smith H.O."/>
            <person name="Gibbs R.A."/>
            <person name="Myers E.W."/>
            <person name="Rubin G.M."/>
            <person name="Venter J.C."/>
        </authorList>
    </citation>
    <scope>NUCLEOTIDE SEQUENCE [LARGE SCALE GENOMIC DNA]</scope>
    <source>
        <strain evidence="3">Berkeley</strain>
    </source>
</reference>
<reference evidence="22" key="5">
    <citation type="journal article" date="2002" name="Genome Biol.">
        <title>Annotation of the Drosophila melanogaster euchromatic genome: a systematic review.</title>
        <authorList>
            <person name="Misra S."/>
            <person name="Crosby M.A."/>
            <person name="Mungall C.J."/>
            <person name="Matthews B.B."/>
            <person name="Campbell K.S."/>
            <person name="Hradecky P."/>
            <person name="Huang Y."/>
            <person name="Kaminker J.S."/>
            <person name="Millburn G.H."/>
            <person name="Prochnik S.E."/>
            <person name="Smith C.D."/>
            <person name="Tupy J.L."/>
            <person name="Whitfield E.J."/>
            <person name="Bayraktaroglu L."/>
            <person name="Berman B.P."/>
            <person name="Bettencourt B.R."/>
            <person name="Celniker S.E."/>
            <person name="de Grey A.D.N.J."/>
            <person name="Drysdale R.A."/>
            <person name="Harris N.L."/>
            <person name="Richter J."/>
            <person name="Russo S."/>
            <person name="Schroeder A.J."/>
            <person name="Shu S.Q."/>
            <person name="Stapleton M."/>
            <person name="Yamada C."/>
            <person name="Ashburner M."/>
            <person name="Gelbart W.M."/>
            <person name="Rubin G.M."/>
            <person name="Lewis S.E."/>
        </authorList>
    </citation>
    <scope>GENOME REANNOTATION</scope>
    <source>
        <strain>Berkeley</strain>
    </source>
</reference>
<reference evidence="22" key="6">
    <citation type="journal article" date="2000" name="Science">
        <title>From sequence to chromosome: the tip of the X chromosome of D. melanogaster.</title>
        <authorList>
            <person name="Benos P.V."/>
            <person name="Gatt M.K."/>
            <person name="Ashburner M."/>
            <person name="Murphy L."/>
            <person name="Harris D."/>
            <person name="Barrell B.G."/>
            <person name="Ferraz C."/>
            <person name="Vidal S."/>
            <person name="Brun C."/>
            <person name="Demailles J."/>
            <person name="Cadieu E."/>
            <person name="Dreano S."/>
            <person name="Gloux S."/>
            <person name="Lelaure V."/>
            <person name="Mottier S."/>
            <person name="Galibert F."/>
            <person name="Borkova D."/>
            <person name="Minana B."/>
            <person name="Kafatos F.C."/>
            <person name="Louis C."/>
            <person name="Siden-Kiamos I."/>
            <person name="Bolshakov S."/>
            <person name="Papagiannakis G."/>
            <person name="Spanos L."/>
            <person name="Cox S."/>
            <person name="Madueno E."/>
            <person name="de Pablos B."/>
            <person name="Modolell J."/>
            <person name="Peter A."/>
            <person name="Schoettler P."/>
            <person name="Werner M."/>
            <person name="Mourkioti F."/>
            <person name="Beinert N."/>
            <person name="Dowe G."/>
            <person name="Schaefer U."/>
            <person name="Jaeckle H."/>
            <person name="Bucheton A."/>
            <person name="Callister D.M."/>
            <person name="Campbell L.A."/>
            <person name="Darlamitsou A."/>
            <person name="Henderson N.S."/>
            <person name="McMillan P.J."/>
            <person name="Salles C."/>
            <person name="Tait E.A."/>
            <person name="Valenti P."/>
            <person name="Saunders R.D.C."/>
            <person name="Glover D.M."/>
        </authorList>
    </citation>
    <scope>NUCLEOTIDE SEQUENCE [LARGE SCALE GENOMIC DNA]</scope>
    <source>
        <strain evidence="4">Oregon-R</strain>
    </source>
</reference>
<reference evidence="22" key="7">
    <citation type="journal article" date="2002" name="Genome Biol.">
        <title>A Drosophila full-length cDNA resource.</title>
        <authorList>
            <person name="Stapleton M."/>
            <person name="Carlson J.W."/>
            <person name="Brokstein P."/>
            <person name="Yu C."/>
            <person name="Champe M."/>
            <person name="George R.A."/>
            <person name="Guarin H."/>
            <person name="Kronmiller B."/>
            <person name="Pacleb J.M."/>
            <person name="Park S."/>
            <person name="Wan K.H."/>
            <person name="Rubin G.M."/>
            <person name="Celniker S.E."/>
        </authorList>
    </citation>
    <scope>NUCLEOTIDE SEQUENCE [LARGE SCALE MRNA]</scope>
    <source>
        <strain evidence="5">Berkeley</strain>
        <tissue evidence="5">Embryo</tissue>
    </source>
</reference>
<reference key="8">
    <citation type="journal article" date="2004" name="Curr. Biol.">
        <title>The Drosophila F box protein archipelago regulates dMyc protein levels in vivo.</title>
        <authorList>
            <person name="Moberg K.H."/>
            <person name="Mukherjee A."/>
            <person name="Veraksa A."/>
            <person name="Artavanis-Tsakonas S."/>
            <person name="Hariharan I.K."/>
        </authorList>
    </citation>
    <scope>FUNCTION</scope>
    <scope>INTERACTION WITH AGO</scope>
</reference>
<reference key="9">
    <citation type="journal article" date="2005" name="Proc. Natl. Acad. Sci. U.S.A.">
        <title>Myc interacts genetically with Tip48/Reptin and Tip49/Pontin to control growth and proliferation during Drosophila development.</title>
        <authorList>
            <person name="Bellosta P."/>
            <person name="Hulf T."/>
            <person name="Balla Diop S."/>
            <person name="Usseglio F."/>
            <person name="Pradel J."/>
            <person name="Aragnol D."/>
            <person name="Gallant P."/>
        </authorList>
    </citation>
    <scope>FUNCTION</scope>
    <scope>INTERACTION WITH PONT AND REPT</scope>
</reference>
<reference key="10">
    <citation type="journal article" date="2007" name="Genes Dev.">
        <title>The Trithorax group protein Lid is a trimethyl histone H3K4 demethylase required for dMyc-induced cell growth.</title>
        <authorList>
            <person name="Secombe J."/>
            <person name="Li L."/>
            <person name="Carlos L."/>
            <person name="Eisenman R.N."/>
        </authorList>
    </citation>
    <scope>FUNCTION</scope>
    <scope>INTERACTION WITH LID</scope>
    <scope>IDENTIFICATION IN COMPLEX WITH LID AND ASH2</scope>
</reference>
<reference key="11">
    <citation type="journal article" date="2008" name="J. Proteome Res.">
        <title>Phosphoproteome analysis of Drosophila melanogaster embryos.</title>
        <authorList>
            <person name="Zhai B."/>
            <person name="Villen J."/>
            <person name="Beausoleil S.A."/>
            <person name="Mintseris J."/>
            <person name="Gygi S.P."/>
        </authorList>
    </citation>
    <scope>PHOSPHORYLATION [LARGE SCALE ANALYSIS] AT THR-217 AND SER-220</scope>
    <scope>IDENTIFICATION BY MASS SPECTROMETRY</scope>
    <source>
        <tissue>Embryo</tissue>
    </source>
</reference>
<reference key="12">
    <citation type="journal article" date="2010" name="EMBO J.">
        <title>The miRNA machinery targets Mei-P26 and regulates Myc protein levels in the Drosophila wing.</title>
        <authorList>
            <person name="Herranz H."/>
            <person name="Hong X."/>
            <person name="Perez L."/>
            <person name="Ferreira A."/>
            <person name="Olivieri D."/>
            <person name="Cohen S.M."/>
            <person name="Milan M."/>
        </authorList>
    </citation>
    <scope>INDUCTION BY MEI-P26</scope>
</reference>
<reference key="13">
    <citation type="journal article" date="2013" name="Development">
        <title>The Drosophila ubiquitin-specific protease Puffyeye regulates dMyc-mediated growth.</title>
        <authorList>
            <person name="Li L."/>
            <person name="Anderson S."/>
            <person name="Secombe J."/>
            <person name="Eisenman R.N."/>
        </authorList>
    </citation>
    <scope>FUNCTION</scope>
    <scope>INTERACTION WITH AGO AND PUF</scope>
</reference>
<reference key="14">
    <citation type="journal article" date="2014" name="Mol. Cell. Biol.">
        <title>Drosophila mbm is a nucleolar myc and casein kinase 2 target required for ribosome biogenesis and cell growth of central brain neuroblasts.</title>
        <authorList>
            <person name="Hovhanyan A."/>
            <person name="Herter E.K."/>
            <person name="Pfannstiel J."/>
            <person name="Gallant P."/>
            <person name="Raabe T."/>
        </authorList>
    </citation>
    <scope>FUNCTION</scope>
</reference>
<reference key="15">
    <citation type="journal article" date="2015" name="Sci. Rep.">
        <title>Target of Rapamycin Complex 2 regulates cell growth via Myc in Drosophila.</title>
        <authorList>
            <person name="Kuo Y."/>
            <person name="Huang H."/>
            <person name="Cai T."/>
            <person name="Wang T."/>
        </authorList>
    </citation>
    <scope>FUNCTION</scope>
    <scope>SUBCELLULAR LOCATION</scope>
</reference>
<reference key="16">
    <citation type="journal article" date="2015" name="J. Biol. Chem.">
        <title>Drosophila Low Temperature Viability Protein 1 (LTV1) Is Required for Ribosome Biogenesis and Cell Growth Downstream of Drosophila Myc (dMyc).</title>
        <authorList>
            <person name="Kim W."/>
            <person name="Kim H.D."/>
            <person name="Jung Y."/>
            <person name="Kim J."/>
            <person name="Chung J."/>
        </authorList>
    </citation>
    <scope>FUNCTION</scope>
</reference>
<reference key="17">
    <citation type="journal article" date="2020" name="Development">
        <title>WD40 protein Wuho controls germline homeostasis via TRIM-NHL tumor suppressor Mei-p26 in Drosophila.</title>
        <authorList>
            <person name="Rastegari E."/>
            <person name="Kajal K."/>
            <person name="Tan B.S."/>
            <person name="Huang F."/>
            <person name="Chen R.H."/>
            <person name="Hsieh T.S."/>
            <person name="Hsu H.J."/>
        </authorList>
    </citation>
    <scope>INTERACTION WITH WH</scope>
</reference>
<reference key="18">
    <citation type="journal article" date="2022" name="EMBO J.">
        <title>Myc suppresses male-male courtship in Drosophila.</title>
        <authorList>
            <person name="Pan Y."/>
            <person name="Li W."/>
            <person name="Deng Z."/>
            <person name="Sun Y."/>
            <person name="Ma X."/>
            <person name="Liang R."/>
            <person name="Guo X."/>
            <person name="Sun Y."/>
            <person name="Li W."/>
            <person name="Jiao R."/>
            <person name="Xue L."/>
        </authorList>
    </citation>
    <scope>FUNCTION</scope>
    <scope>DISRUPTION PHENOTYPE</scope>
</reference>
<reference key="19">
    <citation type="journal article" date="2023" name="IScience">
        <title>Fast drosophila enterocyte regrowth after infection involves a reverse metabolic flux driven by an amino acid transporter.</title>
        <authorList>
            <person name="Socha C."/>
            <person name="Pais I.S."/>
            <person name="Lee K.Z."/>
            <person name="Liu J."/>
            <person name="Liegeois S."/>
            <person name="Lestradet M."/>
            <person name="Ferrandon D."/>
        </authorList>
    </citation>
    <scope>FUNCTION</scope>
    <scope>DISRUPTION PHENOTYPE</scope>
</reference>
<reference key="20">
    <citation type="journal article" date="2024" name="EMBO Rep.">
        <title>Ribogenesis boosts controlled by HEATR1-MYC interplay promote transition into brain tumour growth.</title>
        <authorList>
            <person name="Diaz L.R."/>
            <person name="Gil-Ranedo J."/>
            <person name="Jaworek K.J."/>
            <person name="Nsek N."/>
            <person name="Marques J.P."/>
            <person name="Costa E."/>
            <person name="Hilton D.A."/>
            <person name="Bieluczyk H."/>
            <person name="Warrington O."/>
            <person name="Hanemann C.O."/>
            <person name="Futschik M.E."/>
            <person name="Bossing T."/>
            <person name="Barros C.S."/>
        </authorList>
    </citation>
    <scope>SUBCELLULAR LOCATION</scope>
    <scope>DISRUPTION PHENOTYPE</scope>
</reference>
<comment type="function">
    <text evidence="6 7 8 11 12 13 14 16 17 19">Participates in the regulation of gene transcription (PubMed:16087886, PubMed:24173801, PubMed:24615015, PubMed:25858587, PubMed:25999153, PubMed:8929412). Binds DNA in a non-specific manner, yet also specifically recognizes the core sequence CAC[GA]TG (PubMed:8929412). Seems to activate the transcription of growth-related genes; required for cellular proliferation and growth (PubMed:16087886, PubMed:25858587, PubMed:25999153). Functions in the TORC2-mediated regulation of cell growth, acting downstream of the TORC2 complex (PubMed:25999153). Inhibits the demethylase activity of Lid (PubMed:17311883). Activates transcription of mbm (PubMed:24615015). Has a role in ribosome biogenesis and endoreplication in fat body cells by activating the transcription of LTV1 (PubMed:25858587). Able to induce the SCF E3 ubiquitin-protein ligase member archipelago (ago) which functions in its degradation (PubMed:15182669, PubMed:24173801). It may therefore create a negative feedback loop with ago that is regulated by the ubiquitin hydrolase puf (PubMed:24173801). In dopaminergic neurons, regulates dopamine levels by binding to the E-box (E1) of the dopamine decarboxylase Ddc promoter and thereby inhibiting its transcription (PubMed:35167135). This regulation is required to suppress male-male courtship (PubMed:35167135). Involved in the acs and insulin signaling mediated non-cell-autonomous induction of amino acid release into the hemolymph following the cytoplasmic purge response to intestinal bacterial infection; required for efficient recovery of enterocyte thickness (PubMed:37636057).</text>
</comment>
<comment type="subunit">
    <text evidence="6 7 8 11 15 19">Efficient DNA binding requires dimerization with another bHLH protein (PubMed:8929412). Binds DNA as a heterodimer with Max (PubMed:8929412). Interacts with ago (PubMed:15182669, PubMed:24173801). Interacts with lid (PubMed:17311883). Part of a complex containing lid, Myc and ash2 (PubMed:17311883). Component of a complex with pont and rept (PubMed:16087886). Interacts with puf (PubMed:24173801). Interacts with wh/wuho; the interaction may be mediated by mei-P26 and may be involved in the regulation of ribosome biogenesis (PubMed:31941704).</text>
</comment>
<comment type="interaction">
    <interactant intactId="EBI-120162">
        <id>Q9W4S7</id>
    </interactant>
    <interactant intactId="EBI-138334">
        <id>Q9VZF4</id>
        <label>ago</label>
    </interactant>
    <organismsDiffer>false</organismsDiffer>
    <experiments>2</experiments>
</comment>
<comment type="interaction">
    <interactant intactId="EBI-120162">
        <id>Q9W4S7</id>
    </interactant>
    <interactant intactId="EBI-153866">
        <id>P16371</id>
        <label>gro</label>
    </interactant>
    <organismsDiffer>false</organismsDiffer>
    <experiments>3</experiments>
</comment>
<comment type="interaction">
    <interactant intactId="EBI-120162">
        <id>Q9W4S7</id>
    </interactant>
    <interactant intactId="EBI-15661898">
        <id>P16371-2</id>
        <label>gro</label>
    </interactant>
    <organismsDiffer>false</organismsDiffer>
    <experiments>3</experiments>
</comment>
<comment type="interaction">
    <interactant intactId="EBI-120162">
        <id>Q9W4S7</id>
    </interactant>
    <interactant intactId="EBI-193577">
        <id>P91664</id>
        <label>Max</label>
    </interactant>
    <organismsDiffer>false</organismsDiffer>
    <experiments>3</experiments>
</comment>
<comment type="interaction">
    <interactant intactId="EBI-120162">
        <id>Q9W4S7</id>
    </interactant>
    <interactant intactId="EBI-234957">
        <id>Q9VH07</id>
        <label>pont</label>
    </interactant>
    <organismsDiffer>false</organismsDiffer>
    <experiments>4</experiments>
</comment>
<comment type="interaction">
    <interactant intactId="EBI-120162">
        <id>Q9W4S7</id>
    </interactant>
    <interactant intactId="EBI-192924">
        <id>Q9V3K3</id>
        <label>rept</label>
    </interactant>
    <organismsDiffer>false</organismsDiffer>
    <experiments>4</experiments>
</comment>
<comment type="subcellular location">
    <subcellularLocation>
        <location evidence="14 18">Nucleus</location>
    </subcellularLocation>
    <subcellularLocation>
        <location evidence="18">Nucleus</location>
        <location evidence="18">Nucleolus</location>
    </subcellularLocation>
    <subcellularLocation>
        <location evidence="14">Cytoplasm</location>
    </subcellularLocation>
    <text evidence="14 18">Translocation from the cytoplasm to the nucleus may be promoted by the TORC2 complex (Lst8 and rictor) (PubMed:25999153). Localization to the nucleolus is dependent on Heatr1 (PubMed:38225354).</text>
</comment>
<comment type="tissue specificity">
    <text evidence="19 20">Low levels detected throughout embryo before cellular blastoderm formation, particularly concentrated in pole plasm. Zygotic expression detected during cellular blastoderm stage in endodermal anlagen of anterior and posterior midgut at both poles. After gastrulation, expression detected in invaginating ventral furrow of mesoderm. Continued expression in anterior and posterior midgut and mesoderm during germband extension. During late germ-band retraction, expression remains detectable in fusing midgut and presumed developing somatic musculature.</text>
</comment>
<comment type="developmental stage">
    <text evidence="19 20">Expressed both maternally and zygotically in embryos.</text>
</comment>
<comment type="induction">
    <text evidence="10">Negatively regulated post-translationally by mei-P26 in a proteasome-dependent manner.</text>
</comment>
<comment type="PTM">
    <text evidence="23">Probably targeted for ubiquitination by the SFC ubiquitin ligase complex member ago, leading to its proteasomal degradation.</text>
</comment>
<comment type="disruption phenotype">
    <text evidence="16 17 18">RNAi-mediated knockdown in the neurons, only dopaminergic neurons or only adult neurons increases transcription of the dopamine decarboxylase Ddc and thereby dopamine concentration (PubMed:35167135). In addition, induces male courtship propensity towards other males without altering male sexual preference towards females (PubMed:35167135). RNAi-mediated knockdown in muscle or fat body does not elicit male-male courtship (PubMed:35167135). Simultaneous knockdown of Ddc and myc restores increased dopamine levels and the induced male-male courtship observed in the single myc knockdown (PubMed:35167135). Simultaneous knockdown of dopamine receptor Dop1R1 and myc restores the induced male-male courtship observed in the single myc knockdown (PubMed:35167135). RNAi-mediated knockdown in type II neuroblast stem cells prevents abnormal growth and proliferation of tumor initiating cells in brat-deficient individuals preventing brain tumor development; tumor initiating cells show reduced levels of ribogenesis (PubMed:38225354). RNAi-mediated knockdown in gut enterocytes impairs recovery of intestinal wall thickness after the cytoplasmic purge response to intestinal bacterial infection (PubMed:37636057).</text>
</comment>
<comment type="similarity">
    <text evidence="22">Belongs to the Myc transcription factor family.</text>
</comment>
<evidence type="ECO:0000255" key="1">
    <source>
        <dbReference type="PROSITE-ProRule" id="PRU00981"/>
    </source>
</evidence>
<evidence type="ECO:0000256" key="2">
    <source>
        <dbReference type="SAM" id="MobiDB-lite"/>
    </source>
</evidence>
<evidence type="ECO:0000269" key="3">
    <source>
    </source>
</evidence>
<evidence type="ECO:0000269" key="4">
    <source>
    </source>
</evidence>
<evidence type="ECO:0000269" key="5">
    <source>
    </source>
</evidence>
<evidence type="ECO:0000269" key="6">
    <source>
    </source>
</evidence>
<evidence type="ECO:0000269" key="7">
    <source>
    </source>
</evidence>
<evidence type="ECO:0000269" key="8">
    <source>
    </source>
</evidence>
<evidence type="ECO:0000269" key="9">
    <source>
    </source>
</evidence>
<evidence type="ECO:0000269" key="10">
    <source>
    </source>
</evidence>
<evidence type="ECO:0000269" key="11">
    <source>
    </source>
</evidence>
<evidence type="ECO:0000269" key="12">
    <source>
    </source>
</evidence>
<evidence type="ECO:0000269" key="13">
    <source>
    </source>
</evidence>
<evidence type="ECO:0000269" key="14">
    <source>
    </source>
</evidence>
<evidence type="ECO:0000269" key="15">
    <source>
    </source>
</evidence>
<evidence type="ECO:0000269" key="16">
    <source>
    </source>
</evidence>
<evidence type="ECO:0000269" key="17">
    <source>
    </source>
</evidence>
<evidence type="ECO:0000269" key="18">
    <source>
    </source>
</evidence>
<evidence type="ECO:0000269" key="19">
    <source>
    </source>
</evidence>
<evidence type="ECO:0000269" key="20">
    <source>
    </source>
</evidence>
<evidence type="ECO:0000303" key="21">
    <source>
    </source>
</evidence>
<evidence type="ECO:0000305" key="22"/>
<evidence type="ECO:0000305" key="23">
    <source>
    </source>
</evidence>
<evidence type="ECO:0000312" key="24">
    <source>
        <dbReference type="FlyBase" id="FBgn0262656"/>
    </source>
</evidence>
<evidence type="ECO:0000312" key="25">
    <source>
        <dbReference type="Proteomes" id="UP000000803"/>
    </source>
</evidence>
<name>MYC_DROME</name>
<feature type="chain" id="PRO_0000127322" description="Myc proto-oncogene protein">
    <location>
        <begin position="1"/>
        <end position="717"/>
    </location>
</feature>
<feature type="domain" description="bHLH" evidence="1">
    <location>
        <begin position="625"/>
        <end position="677"/>
    </location>
</feature>
<feature type="region of interest" description="Disordered" evidence="2">
    <location>
        <begin position="288"/>
        <end position="376"/>
    </location>
</feature>
<feature type="region of interest" description="Disordered" evidence="2">
    <location>
        <begin position="462"/>
        <end position="535"/>
    </location>
</feature>
<feature type="region of interest" description="Disordered" evidence="2">
    <location>
        <begin position="555"/>
        <end position="584"/>
    </location>
</feature>
<feature type="region of interest" description="Basic motif" evidence="1">
    <location>
        <begin position="625"/>
        <end position="638"/>
    </location>
</feature>
<feature type="region of interest" description="Helix-loop-helix motif" evidence="1">
    <location>
        <begin position="639"/>
        <end position="677"/>
    </location>
</feature>
<feature type="compositionally biased region" description="Low complexity" evidence="2">
    <location>
        <begin position="298"/>
        <end position="311"/>
    </location>
</feature>
<feature type="compositionally biased region" description="Polar residues" evidence="2">
    <location>
        <begin position="351"/>
        <end position="360"/>
    </location>
</feature>
<feature type="compositionally biased region" description="Low complexity" evidence="2">
    <location>
        <begin position="361"/>
        <end position="376"/>
    </location>
</feature>
<feature type="compositionally biased region" description="Polar residues" evidence="2">
    <location>
        <begin position="462"/>
        <end position="488"/>
    </location>
</feature>
<feature type="compositionally biased region" description="Low complexity" evidence="2">
    <location>
        <begin position="489"/>
        <end position="523"/>
    </location>
</feature>
<feature type="modified residue" description="Phosphothreonine" evidence="9">
    <location>
        <position position="217"/>
    </location>
</feature>
<feature type="modified residue" description="Phosphoserine" evidence="9">
    <location>
        <position position="220"/>
    </location>
</feature>
<feature type="sequence conflict" description="In Ref. 3; AAD00517." evidence="22" ref="3">
    <original>G</original>
    <variation>D</variation>
    <location>
        <position position="353"/>
    </location>
</feature>
<feature type="sequence conflict" description="In Ref. 3; AAD00517." evidence="22" ref="3">
    <original>N</original>
    <variation>S</variation>
    <location>
        <position position="362"/>
    </location>
</feature>
<feature type="sequence conflict" description="In Ref. 3; AAD00517." evidence="22" ref="3">
    <original>S</original>
    <variation>K</variation>
    <location>
        <position position="365"/>
    </location>
</feature>
<feature type="sequence conflict" description="In Ref. 3; AAD00517." evidence="22" ref="3">
    <original>NNKLK</original>
    <variation>IKNNN</variation>
    <location>
        <begin position="369"/>
        <end position="373"/>
    </location>
</feature>
<protein>
    <recommendedName>
        <fullName evidence="22">Myc proto-oncogene protein</fullName>
        <shortName evidence="21">dMyc</shortName>
    </recommendedName>
    <alternativeName>
        <fullName evidence="21">Protein diminutive</fullName>
    </alternativeName>
</protein>